<dbReference type="EC" id="3.1.3.45" evidence="3"/>
<dbReference type="EMBL" id="L42023">
    <property type="protein sequence ID" value="AAC23325.1"/>
    <property type="molecule type" value="Genomic_DNA"/>
</dbReference>
<dbReference type="PIR" id="G64174">
    <property type="entry name" value="G64174"/>
</dbReference>
<dbReference type="RefSeq" id="NP_439821.1">
    <property type="nucleotide sequence ID" value="NC_000907.1"/>
</dbReference>
<dbReference type="PDB" id="1J8D">
    <property type="method" value="X-ray"/>
    <property type="resolution" value="2.30 A"/>
    <property type="chains" value="A/B/C/D=1-180"/>
</dbReference>
<dbReference type="PDB" id="1K1E">
    <property type="method" value="X-ray"/>
    <property type="resolution" value="1.67 A"/>
    <property type="chains" value="A/B/C/D/E/F/G/H/I/J/K/L=1-180"/>
</dbReference>
<dbReference type="PDB" id="4HGP">
    <property type="method" value="X-ray"/>
    <property type="resolution" value="1.80 A"/>
    <property type="chains" value="A=1-180"/>
</dbReference>
<dbReference type="PDBsum" id="1J8D"/>
<dbReference type="PDBsum" id="1K1E"/>
<dbReference type="PDBsum" id="4HGP"/>
<dbReference type="SMR" id="P45314"/>
<dbReference type="STRING" id="71421.HI_1679"/>
<dbReference type="DrugBank" id="DB03814">
    <property type="generic name" value="2-(N-morpholino)ethanesulfonic acid"/>
</dbReference>
<dbReference type="EnsemblBacteria" id="AAC23325">
    <property type="protein sequence ID" value="AAC23325"/>
    <property type="gene ID" value="HI_1679"/>
</dbReference>
<dbReference type="KEGG" id="hin:HI_1679"/>
<dbReference type="PATRIC" id="fig|71421.8.peg.1758"/>
<dbReference type="eggNOG" id="COG1778">
    <property type="taxonomic scope" value="Bacteria"/>
</dbReference>
<dbReference type="HOGENOM" id="CLU_106694_1_0_6"/>
<dbReference type="OrthoDB" id="9805604at2"/>
<dbReference type="PhylomeDB" id="P45314"/>
<dbReference type="BioCyc" id="HINF71421:G1GJ1-1695-MONOMER"/>
<dbReference type="BRENDA" id="3.1.3.45">
    <property type="organism ID" value="2529"/>
</dbReference>
<dbReference type="EvolutionaryTrace" id="P45314"/>
<dbReference type="Proteomes" id="UP000000579">
    <property type="component" value="Chromosome"/>
</dbReference>
<dbReference type="GO" id="GO:0019143">
    <property type="term" value="F:3-deoxy-manno-octulosonate-8-phosphatase activity"/>
    <property type="evidence" value="ECO:0007669"/>
    <property type="project" value="UniProtKB-EC"/>
</dbReference>
<dbReference type="GO" id="GO:0046872">
    <property type="term" value="F:metal ion binding"/>
    <property type="evidence" value="ECO:0007669"/>
    <property type="project" value="UniProtKB-KW"/>
</dbReference>
<dbReference type="GO" id="GO:0009103">
    <property type="term" value="P:lipopolysaccharide biosynthetic process"/>
    <property type="evidence" value="ECO:0007669"/>
    <property type="project" value="UniProtKB-KW"/>
</dbReference>
<dbReference type="CDD" id="cd01630">
    <property type="entry name" value="HAD_KDO-like"/>
    <property type="match status" value="1"/>
</dbReference>
<dbReference type="FunFam" id="3.40.50.1000:FF:000029">
    <property type="entry name" value="3-deoxy-D-manno-octulosonate 8-phosphate phosphatase KdsC"/>
    <property type="match status" value="1"/>
</dbReference>
<dbReference type="Gene3D" id="3.40.50.1000">
    <property type="entry name" value="HAD superfamily/HAD-like"/>
    <property type="match status" value="1"/>
</dbReference>
<dbReference type="InterPro" id="IPR050793">
    <property type="entry name" value="CMP-NeuNAc_synthase"/>
</dbReference>
<dbReference type="InterPro" id="IPR036412">
    <property type="entry name" value="HAD-like_sf"/>
</dbReference>
<dbReference type="InterPro" id="IPR006549">
    <property type="entry name" value="HAD-SF_hydro_IIIA"/>
</dbReference>
<dbReference type="InterPro" id="IPR023214">
    <property type="entry name" value="HAD_sf"/>
</dbReference>
<dbReference type="InterPro" id="IPR010023">
    <property type="entry name" value="KdsC_fam"/>
</dbReference>
<dbReference type="NCBIfam" id="TIGR01662">
    <property type="entry name" value="HAD-SF-IIIA"/>
    <property type="match status" value="1"/>
</dbReference>
<dbReference type="NCBIfam" id="TIGR01670">
    <property type="entry name" value="KdsC-phosphatas"/>
    <property type="match status" value="1"/>
</dbReference>
<dbReference type="PANTHER" id="PTHR21485">
    <property type="entry name" value="HAD SUPERFAMILY MEMBERS CMAS AND KDSC"/>
    <property type="match status" value="1"/>
</dbReference>
<dbReference type="PANTHER" id="PTHR21485:SF6">
    <property type="entry name" value="N-ACYLNEURAMINATE CYTIDYLYLTRANSFERASE-RELATED"/>
    <property type="match status" value="1"/>
</dbReference>
<dbReference type="Pfam" id="PF08282">
    <property type="entry name" value="Hydrolase_3"/>
    <property type="match status" value="1"/>
</dbReference>
<dbReference type="PIRSF" id="PIRSF006118">
    <property type="entry name" value="KDO8-P_Ptase"/>
    <property type="match status" value="1"/>
</dbReference>
<dbReference type="SFLD" id="SFLDF00036">
    <property type="entry name" value="deoxy-d-mannose-octulosonate_8"/>
    <property type="match status" value="1"/>
</dbReference>
<dbReference type="SFLD" id="SFLDS00003">
    <property type="entry name" value="Haloacid_Dehalogenase"/>
    <property type="match status" value="1"/>
</dbReference>
<dbReference type="SUPFAM" id="SSF56784">
    <property type="entry name" value="HAD-like"/>
    <property type="match status" value="1"/>
</dbReference>
<evidence type="ECO:0000250" key="1">
    <source>
        <dbReference type="UniProtKB" id="P67653"/>
    </source>
</evidence>
<evidence type="ECO:0000269" key="2">
    <source>
    </source>
</evidence>
<evidence type="ECO:0000269" key="3">
    <source>
    </source>
</evidence>
<evidence type="ECO:0000305" key="4"/>
<evidence type="ECO:0000305" key="5">
    <source>
    </source>
</evidence>
<evidence type="ECO:0000305" key="6">
    <source>
    </source>
</evidence>
<evidence type="ECO:0007829" key="7">
    <source>
        <dbReference type="PDB" id="1K1E"/>
    </source>
</evidence>
<name>KDSC_HAEIN</name>
<accession>P45314</accession>
<protein>
    <recommendedName>
        <fullName>3-deoxy-D-manno-octulosonate 8-phosphate phosphatase KdsC</fullName>
        <ecNumber evidence="3">3.1.3.45</ecNumber>
    </recommendedName>
    <alternativeName>
        <fullName>KDO 8-P phosphatase</fullName>
    </alternativeName>
</protein>
<gene>
    <name type="ordered locus">HI_1679</name>
</gene>
<feature type="chain" id="PRO_0000201703" description="3-deoxy-D-manno-octulosonate 8-phosphate phosphatase KdsC">
    <location>
        <begin position="1"/>
        <end position="180"/>
    </location>
</feature>
<feature type="binding site" evidence="5">
    <location>
        <position position="14"/>
    </location>
    <ligand>
        <name>Mg(2+)</name>
        <dbReference type="ChEBI" id="CHEBI:18420"/>
    </ligand>
</feature>
<feature type="binding site" evidence="5">
    <location>
        <position position="16"/>
    </location>
    <ligand>
        <name>Mg(2+)</name>
        <dbReference type="ChEBI" id="CHEBI:18420"/>
    </ligand>
</feature>
<feature type="binding site" evidence="1">
    <location>
        <position position="16"/>
    </location>
    <ligand>
        <name>substrate</name>
    </ligand>
</feature>
<feature type="binding site" evidence="1">
    <location>
        <begin position="37"/>
        <end position="41"/>
    </location>
    <ligand>
        <name>substrate</name>
    </ligand>
</feature>
<feature type="binding site" evidence="1">
    <location>
        <position position="45"/>
    </location>
    <ligand>
        <name>substrate</name>
    </ligand>
</feature>
<feature type="binding site" evidence="1">
    <location>
        <position position="60"/>
    </location>
    <ligand>
        <name>substrate</name>
    </ligand>
</feature>
<feature type="binding site" evidence="1">
    <location>
        <position position="68"/>
    </location>
    <ligand>
        <name>substrate</name>
    </ligand>
</feature>
<feature type="binding site" evidence="1">
    <location>
        <position position="84"/>
    </location>
    <ligand>
        <name>substrate</name>
    </ligand>
</feature>
<feature type="binding site" evidence="5">
    <location>
        <position position="107"/>
    </location>
    <ligand>
        <name>Mg(2+)</name>
        <dbReference type="ChEBI" id="CHEBI:18420"/>
    </ligand>
</feature>
<feature type="helix" evidence="7">
    <location>
        <begin position="5"/>
        <end position="7"/>
    </location>
</feature>
<feature type="strand" evidence="7">
    <location>
        <begin position="10"/>
        <end position="14"/>
    </location>
</feature>
<feature type="turn" evidence="7">
    <location>
        <begin position="16"/>
        <end position="18"/>
    </location>
</feature>
<feature type="strand" evidence="7">
    <location>
        <begin position="22"/>
        <end position="27"/>
    </location>
</feature>
<feature type="strand" evidence="7">
    <location>
        <begin position="30"/>
        <end position="37"/>
    </location>
</feature>
<feature type="helix" evidence="7">
    <location>
        <begin position="38"/>
        <end position="49"/>
    </location>
</feature>
<feature type="strand" evidence="7">
    <location>
        <begin position="53"/>
        <end position="59"/>
    </location>
</feature>
<feature type="helix" evidence="7">
    <location>
        <begin position="63"/>
        <end position="72"/>
    </location>
</feature>
<feature type="strand" evidence="7">
    <location>
        <begin position="76"/>
        <end position="80"/>
    </location>
</feature>
<feature type="helix" evidence="7">
    <location>
        <begin position="84"/>
        <end position="95"/>
    </location>
</feature>
<feature type="helix" evidence="7">
    <location>
        <begin position="99"/>
        <end position="101"/>
    </location>
</feature>
<feature type="strand" evidence="7">
    <location>
        <begin position="102"/>
        <end position="106"/>
    </location>
</feature>
<feature type="helix" evidence="7">
    <location>
        <begin position="109"/>
        <end position="111"/>
    </location>
</feature>
<feature type="helix" evidence="7">
    <location>
        <begin position="112"/>
        <end position="117"/>
    </location>
</feature>
<feature type="strand" evidence="7">
    <location>
        <begin position="118"/>
        <end position="123"/>
    </location>
</feature>
<feature type="helix" evidence="7">
    <location>
        <begin position="129"/>
        <end position="132"/>
    </location>
</feature>
<feature type="strand" evidence="7">
    <location>
        <begin position="135"/>
        <end position="138"/>
    </location>
</feature>
<feature type="turn" evidence="7">
    <location>
        <begin position="143"/>
        <end position="146"/>
    </location>
</feature>
<feature type="helix" evidence="7">
    <location>
        <begin position="147"/>
        <end position="158"/>
    </location>
</feature>
<feature type="helix" evidence="7">
    <location>
        <begin position="163"/>
        <end position="166"/>
    </location>
</feature>
<feature type="helix" evidence="7">
    <location>
        <begin position="168"/>
        <end position="174"/>
    </location>
</feature>
<feature type="helix" evidence="7">
    <location>
        <begin position="175"/>
        <end position="177"/>
    </location>
</feature>
<sequence length="180" mass="19432">MQQKLENIKFVITDVDGVLTDGQLHYDANGEAIKSFHVRDGLGIKMLMDADIQVAVLSGRDSPILRRRIADLGIKLFFLGKLEKETACFDLMKQAGVTAEQTAYIGDDSVDLPAFAACGTSFAVADAPIYVKNAVDHVLSTHGGKGAFREMSDMILQAQGKSSVFDTAQGFLKSVKSMGQ</sequence>
<proteinExistence type="evidence at protein level"/>
<organism>
    <name type="scientific">Haemophilus influenzae (strain ATCC 51907 / DSM 11121 / KW20 / Rd)</name>
    <dbReference type="NCBI Taxonomy" id="71421"/>
    <lineage>
        <taxon>Bacteria</taxon>
        <taxon>Pseudomonadati</taxon>
        <taxon>Pseudomonadota</taxon>
        <taxon>Gammaproteobacteria</taxon>
        <taxon>Pasteurellales</taxon>
        <taxon>Pasteurellaceae</taxon>
        <taxon>Haemophilus</taxon>
    </lineage>
</organism>
<keyword id="KW-0002">3D-structure</keyword>
<keyword id="KW-0378">Hydrolase</keyword>
<keyword id="KW-0448">Lipopolysaccharide biosynthesis</keyword>
<keyword id="KW-0460">Magnesium</keyword>
<keyword id="KW-0479">Metal-binding</keyword>
<keyword id="KW-1185">Reference proteome</keyword>
<reference key="1">
    <citation type="journal article" date="1995" name="Science">
        <title>Whole-genome random sequencing and assembly of Haemophilus influenzae Rd.</title>
        <authorList>
            <person name="Fleischmann R.D."/>
            <person name="Adams M.D."/>
            <person name="White O."/>
            <person name="Clayton R.A."/>
            <person name="Kirkness E.F."/>
            <person name="Kerlavage A.R."/>
            <person name="Bult C.J."/>
            <person name="Tomb J.-F."/>
            <person name="Dougherty B.A."/>
            <person name="Merrick J.M."/>
            <person name="McKenney K."/>
            <person name="Sutton G.G."/>
            <person name="FitzHugh W."/>
            <person name="Fields C.A."/>
            <person name="Gocayne J.D."/>
            <person name="Scott J.D."/>
            <person name="Shirley R."/>
            <person name="Liu L.-I."/>
            <person name="Glodek A."/>
            <person name="Kelley J.M."/>
            <person name="Weidman J.F."/>
            <person name="Phillips C.A."/>
            <person name="Spriggs T."/>
            <person name="Hedblom E."/>
            <person name="Cotton M.D."/>
            <person name="Utterback T.R."/>
            <person name="Hanna M.C."/>
            <person name="Nguyen D.T."/>
            <person name="Saudek D.M."/>
            <person name="Brandon R.C."/>
            <person name="Fine L.D."/>
            <person name="Fritchman J.L."/>
            <person name="Fuhrmann J.L."/>
            <person name="Geoghagen N.S.M."/>
            <person name="Gnehm C.L."/>
            <person name="McDonald L.A."/>
            <person name="Small K.V."/>
            <person name="Fraser C.M."/>
            <person name="Smith H.O."/>
            <person name="Venter J.C."/>
        </authorList>
    </citation>
    <scope>NUCLEOTIDE SEQUENCE [LARGE SCALE GENOMIC DNA]</scope>
    <source>
        <strain>ATCC 51907 / DSM 11121 / KW20 / Rd</strain>
    </source>
</reference>
<reference key="2">
    <citation type="journal article" date="2003" name="J. Biol. Chem.">
        <title>Escherichia coli YrbI is 3-deoxy-D-manno-octulosonate 8-phosphate phosphatase.</title>
        <authorList>
            <person name="Wu J."/>
            <person name="Woodard R.W."/>
        </authorList>
    </citation>
    <scope>FUNCTION AS A KDO 8-P PHOSPHATASE</scope>
    <scope>CATALYTIC ACTIVITY</scope>
    <scope>COFACTOR</scope>
</reference>
<reference key="3">
    <citation type="journal article" date="2002" name="Proteins">
        <title>From structure to function: YrbI from Haemophilus influenzae (HI1679) is a phosphatase.</title>
        <authorList>
            <person name="Parsons J.F."/>
            <person name="Lim K."/>
            <person name="Tempczyk A."/>
            <person name="Krajewski W."/>
            <person name="Eisenstein E."/>
            <person name="Herzberg O."/>
        </authorList>
    </citation>
    <scope>X-RAY CRYSTALLOGRAPHY (1.67 ANGSTROMS) IN COMPLEX WITH DIVALENT METALS</scope>
    <scope>SUBUNIT</scope>
    <scope>METAL-BINDING</scope>
    <source>
        <strain>ATCC 51907 / DSM 11121 / KW20 / Rd</strain>
    </source>
</reference>
<comment type="function">
    <text evidence="3">Catalyzes the hydrolysis of 3-deoxy-D-manno-octulosonate 8-phosphate (KDO 8-P) to 3-deoxy-D-manno-octulosonate (KDO) and inorganic phosphate.</text>
</comment>
<comment type="catalytic activity">
    <reaction evidence="3">
        <text>3-deoxy-alpha-D-manno-2-octulosonate-8-phosphate + H2O = 3-deoxy-alpha-D-manno-oct-2-ulosonate + phosphate</text>
        <dbReference type="Rhea" id="RHEA:11500"/>
        <dbReference type="ChEBI" id="CHEBI:15377"/>
        <dbReference type="ChEBI" id="CHEBI:43474"/>
        <dbReference type="ChEBI" id="CHEBI:85985"/>
        <dbReference type="ChEBI" id="CHEBI:85986"/>
        <dbReference type="EC" id="3.1.3.45"/>
    </reaction>
</comment>
<comment type="cofactor">
    <cofactor evidence="6">
        <name>Mg(2+)</name>
        <dbReference type="ChEBI" id="CHEBI:18420"/>
    </cofactor>
</comment>
<comment type="subunit">
    <text evidence="2">Homotetramer.</text>
</comment>
<comment type="miscellaneous">
    <text>Cobalt was used in the crystallography experiment but magnesium is likely to be the physiological metal.</text>
</comment>
<comment type="similarity">
    <text evidence="4">Belongs to the KdsC family.</text>
</comment>